<evidence type="ECO:0000250" key="1">
    <source>
        <dbReference type="UniProtKB" id="P54845"/>
    </source>
</evidence>
<evidence type="ECO:0000255" key="2">
    <source>
        <dbReference type="PROSITE-ProRule" id="PRU00978"/>
    </source>
</evidence>
<evidence type="ECO:0000256" key="3">
    <source>
        <dbReference type="SAM" id="MobiDB-lite"/>
    </source>
</evidence>
<evidence type="ECO:0000269" key="4">
    <source>
    </source>
</evidence>
<evidence type="ECO:0000269" key="5">
    <source>
    </source>
</evidence>
<evidence type="ECO:0000305" key="6"/>
<keyword id="KW-0010">Activator</keyword>
<keyword id="KW-0963">Cytoplasm</keyword>
<keyword id="KW-0217">Developmental protein</keyword>
<keyword id="KW-0238">DNA-binding</keyword>
<keyword id="KW-1017">Isopeptide bond</keyword>
<keyword id="KW-0539">Nucleus</keyword>
<keyword id="KW-1185">Reference proteome</keyword>
<keyword id="KW-0804">Transcription</keyword>
<keyword id="KW-0805">Transcription regulation</keyword>
<keyword id="KW-0832">Ubl conjugation</keyword>
<gene>
    <name type="primary">Nrl</name>
</gene>
<accession>P54846</accession>
<organism>
    <name type="scientific">Mus musculus</name>
    <name type="common">Mouse</name>
    <dbReference type="NCBI Taxonomy" id="10090"/>
    <lineage>
        <taxon>Eukaryota</taxon>
        <taxon>Metazoa</taxon>
        <taxon>Chordata</taxon>
        <taxon>Craniata</taxon>
        <taxon>Vertebrata</taxon>
        <taxon>Euteleostomi</taxon>
        <taxon>Mammalia</taxon>
        <taxon>Eutheria</taxon>
        <taxon>Euarchontoglires</taxon>
        <taxon>Glires</taxon>
        <taxon>Rodentia</taxon>
        <taxon>Myomorpha</taxon>
        <taxon>Muroidea</taxon>
        <taxon>Muridae</taxon>
        <taxon>Murinae</taxon>
        <taxon>Mus</taxon>
        <taxon>Mus</taxon>
    </lineage>
</organism>
<comment type="function">
    <text evidence="1">Acts as a transcriptional activator which regulates the expression of several rod-specific genes, including RHO and PDE6B. Also functions as a transcriptional coactivator, stimulating transcription mediated by the transcription factor CRX and NR2E3. Binds to the rhodopsin promoter in a sequence-specific manner.</text>
</comment>
<comment type="subunit">
    <text evidence="1">Interacts with FIZ1; this interaction represses transactivation. Interacts (via the leucine-zipper domain) with CRX.</text>
</comment>
<comment type="subcellular location">
    <subcellularLocation>
        <location evidence="1">Cytoplasm</location>
    </subcellularLocation>
    <subcellularLocation>
        <location evidence="1">Nucleus</location>
    </subcellularLocation>
</comment>
<comment type="tissue specificity">
    <text evidence="4">Expressed in the retina (at protein level) (PubMed:11477108).</text>
</comment>
<comment type="domain">
    <text evidence="1">The minimal transactivation domain (MTD) is conserved across the MAF family, it may activate transcription by recruiting TBP and associated factors at the promoters of target genes.</text>
</comment>
<comment type="PTM">
    <text evidence="5">Disumoylated at Lys-20. Sumoylation modulates the transcriptional activity of NRL on RHO and NR2E3 promoters, and is required for normal rod differentiation.</text>
</comment>
<comment type="PTM">
    <text evidence="1">Phosphorylated.</text>
</comment>
<comment type="disruption phenotype">
    <text evidence="5">Photoreceptor precursors in retina produce only cones that primarily express S-opsin.</text>
</comment>
<comment type="similarity">
    <text evidence="6">Belongs to the bZIP family.</text>
</comment>
<sequence>MAFPPSPLAMEYVNDFDLMKFEIKREPSEGRSGVPTASLGSTPYSSVPPSPTFSEPGMVGGGEAPRPGLEELYWLATLQQQLGSDEVLGLSPDEAVELLQNQGPVSMEGPLGYYSGSPGETGAQHVQLPERFSDAALVSMSVRELNRQLRGCGRDEALRLKQRRRTLKNRGYAQACRSKRLQQRRGLEAERARLAAQLDALRAEVARLARERDLYKARCDRLTSGGPGSDDHTHLFL</sequence>
<reference key="1">
    <citation type="journal article" date="1993" name="Genomics">
        <title>Molecular characterization of the murine neural retina leucine zipper gene, Nrl.</title>
        <authorList>
            <person name="Farjo Q."/>
            <person name="Jackson A.U."/>
            <person name="Xu J."/>
            <person name="Gryzenia M."/>
            <person name="Skolnick C."/>
            <person name="Agarwal N."/>
            <person name="Swaroop A."/>
        </authorList>
    </citation>
    <scope>NUCLEOTIDE SEQUENCE [MRNA]</scope>
    <source>
        <strain>BALB/cJ</strain>
        <tissue>Retina</tissue>
    </source>
</reference>
<reference key="2">
    <citation type="journal article" date="2004" name="Genome Res.">
        <title>The status, quality, and expansion of the NIH full-length cDNA project: the Mammalian Gene Collection (MGC).</title>
        <authorList>
            <consortium name="The MGC Project Team"/>
        </authorList>
    </citation>
    <scope>NUCLEOTIDE SEQUENCE [LARGE SCALE MRNA]</scope>
    <source>
        <tissue>Retina</tissue>
    </source>
</reference>
<reference key="3">
    <citation type="journal article" date="2001" name="J. Biol. Chem.">
        <title>Multiple phosphorylated isoforms of NRL are expressed in rod photoreceptors.</title>
        <authorList>
            <person name="Swain P.K."/>
            <person name="Hicks D."/>
            <person name="Mears A.J."/>
            <person name="Apel I.J."/>
            <person name="Smith J.E."/>
            <person name="John S.K."/>
            <person name="Hendrickson A."/>
            <person name="Milam A.H."/>
            <person name="Swaroop A."/>
        </authorList>
    </citation>
    <scope>TISSUE SPECIFICITY</scope>
</reference>
<reference key="4">
    <citation type="journal article" date="2010" name="J. Biol. Chem.">
        <title>Sumoylation of bZIP transcription factor NRL modulates target gene expression during photoreceptor differentiation.</title>
        <authorList>
            <person name="Roger J.E."/>
            <person name="Nellissery J."/>
            <person name="Kim D.S."/>
            <person name="Swaroop A."/>
        </authorList>
    </citation>
    <scope>DISRUPTION PHENOTYPE</scope>
    <scope>SUMOYLATION AT LYS-20 AND LYS-24</scope>
</reference>
<protein>
    <recommendedName>
        <fullName>Neural retina-specific leucine zipper protein</fullName>
        <shortName>NRL</shortName>
    </recommendedName>
</protein>
<proteinExistence type="evidence at protein level"/>
<feature type="chain" id="PRO_0000076634" description="Neural retina-specific leucine zipper protein">
    <location>
        <begin position="1"/>
        <end position="237"/>
    </location>
</feature>
<feature type="domain" description="bZIP" evidence="2">
    <location>
        <begin position="159"/>
        <end position="222"/>
    </location>
</feature>
<feature type="region of interest" description="Disordered" evidence="3">
    <location>
        <begin position="26"/>
        <end position="64"/>
    </location>
</feature>
<feature type="region of interest" description="Minimal transactivation domain (MTD)" evidence="1">
    <location>
        <begin position="30"/>
        <end position="93"/>
    </location>
</feature>
<feature type="region of interest" description="Basic motif" evidence="2">
    <location>
        <begin position="159"/>
        <end position="185"/>
    </location>
</feature>
<feature type="region of interest" description="Leucine-zipper" evidence="2">
    <location>
        <begin position="187"/>
        <end position="208"/>
    </location>
</feature>
<feature type="cross-link" description="Glycyl lysine isopeptide (Lys-Gly) (interchain with G-Cter in SUMO)" evidence="5">
    <location>
        <position position="20"/>
    </location>
</feature>
<feature type="cross-link" description="Glycyl lysine isopeptide (Lys-Gly) (interchain with G-Cter in SUMO)" evidence="5">
    <location>
        <position position="24"/>
    </location>
</feature>
<name>NRL_MOUSE</name>
<dbReference type="EMBL" id="L14935">
    <property type="protein sequence ID" value="AAA16843.1"/>
    <property type="molecule type" value="mRNA"/>
</dbReference>
<dbReference type="EMBL" id="BC031440">
    <property type="protein sequence ID" value="AAH31440.1"/>
    <property type="molecule type" value="mRNA"/>
</dbReference>
<dbReference type="CCDS" id="CCDS27113.1"/>
<dbReference type="PIR" id="A48912">
    <property type="entry name" value="A48912"/>
</dbReference>
<dbReference type="RefSeq" id="NP_001129546.1">
    <property type="nucleotide sequence ID" value="NM_001136074.3"/>
</dbReference>
<dbReference type="RefSeq" id="NP_001258845.1">
    <property type="nucleotide sequence ID" value="NM_001271916.2"/>
</dbReference>
<dbReference type="RefSeq" id="NP_001258846.1">
    <property type="nucleotide sequence ID" value="NM_001271917.2"/>
</dbReference>
<dbReference type="RefSeq" id="NP_032762.1">
    <property type="nucleotide sequence ID" value="NM_008736.4"/>
</dbReference>
<dbReference type="SMR" id="P54846"/>
<dbReference type="FunCoup" id="P54846">
    <property type="interactions" value="488"/>
</dbReference>
<dbReference type="STRING" id="10090.ENSMUSP00000054457"/>
<dbReference type="iPTMnet" id="P54846"/>
<dbReference type="PhosphoSitePlus" id="P54846"/>
<dbReference type="PaxDb" id="10090-ENSMUSP00000107035"/>
<dbReference type="ProteomicsDB" id="293972"/>
<dbReference type="Antibodypedia" id="22607">
    <property type="antibodies" value="115 antibodies from 26 providers"/>
</dbReference>
<dbReference type="DNASU" id="18185"/>
<dbReference type="Ensembl" id="ENSMUST00000062232.15">
    <property type="protein sequence ID" value="ENSMUSP00000054457.8"/>
    <property type="gene ID" value="ENSMUSG00000040632.17"/>
</dbReference>
<dbReference type="Ensembl" id="ENSMUST00000111404.8">
    <property type="protein sequence ID" value="ENSMUSP00000107035.2"/>
    <property type="gene ID" value="ENSMUSG00000040632.17"/>
</dbReference>
<dbReference type="Ensembl" id="ENSMUST00000178694.3">
    <property type="protein sequence ID" value="ENSMUSP00000136445.2"/>
    <property type="gene ID" value="ENSMUSG00000040632.17"/>
</dbReference>
<dbReference type="GeneID" id="18185"/>
<dbReference type="KEGG" id="mmu:18185"/>
<dbReference type="UCSC" id="uc007tyu.3">
    <property type="organism name" value="mouse"/>
</dbReference>
<dbReference type="AGR" id="MGI:102567"/>
<dbReference type="CTD" id="4901"/>
<dbReference type="MGI" id="MGI:102567">
    <property type="gene designation" value="Nrl"/>
</dbReference>
<dbReference type="VEuPathDB" id="HostDB:ENSMUSG00000040632"/>
<dbReference type="eggNOG" id="KOG4196">
    <property type="taxonomic scope" value="Eukaryota"/>
</dbReference>
<dbReference type="GeneTree" id="ENSGT00940000161862"/>
<dbReference type="HOGENOM" id="CLU_063062_0_0_1"/>
<dbReference type="InParanoid" id="P54846"/>
<dbReference type="OMA" id="SGDHAHF"/>
<dbReference type="OrthoDB" id="5974330at2759"/>
<dbReference type="PhylomeDB" id="P54846"/>
<dbReference type="TreeFam" id="TF325689"/>
<dbReference type="BioGRID-ORCS" id="18185">
    <property type="hits" value="1 hit in 77 CRISPR screens"/>
</dbReference>
<dbReference type="ChiTaRS" id="Nrl">
    <property type="organism name" value="mouse"/>
</dbReference>
<dbReference type="PRO" id="PR:P54846"/>
<dbReference type="Proteomes" id="UP000000589">
    <property type="component" value="Chromosome 14"/>
</dbReference>
<dbReference type="RNAct" id="P54846">
    <property type="molecule type" value="protein"/>
</dbReference>
<dbReference type="Bgee" id="ENSMUSG00000040632">
    <property type="expression patterns" value="Expressed in retinal neural layer and 19 other cell types or tissues"/>
</dbReference>
<dbReference type="ExpressionAtlas" id="P54846">
    <property type="expression patterns" value="baseline and differential"/>
</dbReference>
<dbReference type="GO" id="GO:0005737">
    <property type="term" value="C:cytoplasm"/>
    <property type="evidence" value="ECO:0000250"/>
    <property type="project" value="UniProtKB"/>
</dbReference>
<dbReference type="GO" id="GO:0005829">
    <property type="term" value="C:cytosol"/>
    <property type="evidence" value="ECO:0007669"/>
    <property type="project" value="Ensembl"/>
</dbReference>
<dbReference type="GO" id="GO:0005654">
    <property type="term" value="C:nucleoplasm"/>
    <property type="evidence" value="ECO:0007669"/>
    <property type="project" value="Ensembl"/>
</dbReference>
<dbReference type="GO" id="GO:0005634">
    <property type="term" value="C:nucleus"/>
    <property type="evidence" value="ECO:0000250"/>
    <property type="project" value="UniProtKB"/>
</dbReference>
<dbReference type="GO" id="GO:0001228">
    <property type="term" value="F:DNA-binding transcription activator activity, RNA polymerase II-specific"/>
    <property type="evidence" value="ECO:0000250"/>
    <property type="project" value="UniProtKB"/>
</dbReference>
<dbReference type="GO" id="GO:0003700">
    <property type="term" value="F:DNA-binding transcription factor activity"/>
    <property type="evidence" value="ECO:0000314"/>
    <property type="project" value="MGI"/>
</dbReference>
<dbReference type="GO" id="GO:0043522">
    <property type="term" value="F:leucine zipper domain binding"/>
    <property type="evidence" value="ECO:0007669"/>
    <property type="project" value="Ensembl"/>
</dbReference>
<dbReference type="GO" id="GO:1990841">
    <property type="term" value="F:promoter-specific chromatin binding"/>
    <property type="evidence" value="ECO:0000314"/>
    <property type="project" value="MGI"/>
</dbReference>
<dbReference type="GO" id="GO:0000978">
    <property type="term" value="F:RNA polymerase II cis-regulatory region sequence-specific DNA binding"/>
    <property type="evidence" value="ECO:0000250"/>
    <property type="project" value="UniProtKB"/>
</dbReference>
<dbReference type="GO" id="GO:0010628">
    <property type="term" value="P:positive regulation of gene expression"/>
    <property type="evidence" value="ECO:0000314"/>
    <property type="project" value="MGI"/>
</dbReference>
<dbReference type="GO" id="GO:0045944">
    <property type="term" value="P:positive regulation of transcription by RNA polymerase II"/>
    <property type="evidence" value="ECO:0000314"/>
    <property type="project" value="MGI"/>
</dbReference>
<dbReference type="GO" id="GO:0006355">
    <property type="term" value="P:regulation of DNA-templated transcription"/>
    <property type="evidence" value="ECO:0000315"/>
    <property type="project" value="MGI"/>
</dbReference>
<dbReference type="GO" id="GO:0046548">
    <property type="term" value="P:retinal rod cell development"/>
    <property type="evidence" value="ECO:0000315"/>
    <property type="project" value="MGI"/>
</dbReference>
<dbReference type="CDD" id="cd14718">
    <property type="entry name" value="bZIP_Maf_large"/>
    <property type="match status" value="1"/>
</dbReference>
<dbReference type="FunFam" id="1.20.5.170:FF:000071">
    <property type="entry name" value="Neural retina-specific leucine zipper protein"/>
    <property type="match status" value="1"/>
</dbReference>
<dbReference type="Gene3D" id="1.20.5.170">
    <property type="match status" value="1"/>
</dbReference>
<dbReference type="InterPro" id="IPR004827">
    <property type="entry name" value="bZIP"/>
</dbReference>
<dbReference type="InterPro" id="IPR004826">
    <property type="entry name" value="bZIP_Maf"/>
</dbReference>
<dbReference type="InterPro" id="IPR046347">
    <property type="entry name" value="bZIP_sf"/>
</dbReference>
<dbReference type="InterPro" id="IPR013592">
    <property type="entry name" value="Maf_TF_N"/>
</dbReference>
<dbReference type="InterPro" id="IPR008917">
    <property type="entry name" value="TF_DNA-bd_sf"/>
</dbReference>
<dbReference type="InterPro" id="IPR024874">
    <property type="entry name" value="Transcription_factor_Maf_fam"/>
</dbReference>
<dbReference type="PANTHER" id="PTHR10129:SF24">
    <property type="entry name" value="NEURAL RETINA-SPECIFIC LEUCINE ZIPPER PROTEIN"/>
    <property type="match status" value="1"/>
</dbReference>
<dbReference type="PANTHER" id="PTHR10129">
    <property type="entry name" value="TRANSCRIPTION FACTOR MAF"/>
    <property type="match status" value="1"/>
</dbReference>
<dbReference type="Pfam" id="PF03131">
    <property type="entry name" value="bZIP_Maf"/>
    <property type="match status" value="1"/>
</dbReference>
<dbReference type="Pfam" id="PF08383">
    <property type="entry name" value="Maf_N"/>
    <property type="match status" value="1"/>
</dbReference>
<dbReference type="SMART" id="SM00338">
    <property type="entry name" value="BRLZ"/>
    <property type="match status" value="1"/>
</dbReference>
<dbReference type="SUPFAM" id="SSF47454">
    <property type="entry name" value="A DNA-binding domain in eukaryotic transcription factors"/>
    <property type="match status" value="1"/>
</dbReference>
<dbReference type="SUPFAM" id="SSF57959">
    <property type="entry name" value="Leucine zipper domain"/>
    <property type="match status" value="1"/>
</dbReference>
<dbReference type="PROSITE" id="PS50217">
    <property type="entry name" value="BZIP"/>
    <property type="match status" value="1"/>
</dbReference>